<sequence>MARKTPIERYRNIGISAHIDAGKTTTTERILFYTGVNHKIGEVHDGAATMDWMEQEQERGITITSAATTAFWKGMGNNYPEHRINIIDTPGHVDFTIEVERSMRVLDGACMVYCAVGGVQPQSETVWRQANKYKVPRLAFVNKMDRTGANFFKVYDQLKLRLKANPVPVVVPIGAEENFKGVVDLLKMKAIIWDEASQGTKFDYVDIPAELADTCQEWREKMVEAAAEASEDLMNKYLEEGDLPEADIVKALRDRTIACEIQPMLCGTAFKNKGVQRMLDAVIDFLPSPVDIPPVKGELESGEAAERQASDEEKFSSLAFKIMTDPFVGQLIFFRVYSGVVNSGDTLLNSTKGKKERLGRILQMHANQREEIKEVRAGDIAAAVGLKEATTGDTLCDPAHPIVLERMVFPEPVISQAVEPKTKADQEKMGLALNRLAQEDPSFRVQTDEESGQTIISGMGELHLEILVDRMKREFGVEATVGKPQVAYRETIRSTAKDVDGKFVKQSGGRGQYGHAVITLEPNEQGKGYEFFDEIKGGVIPREYIPAVDKGIQDTLKSGVLAGFPVVDVKVHLTFGSYHDVDSNENAFRMAGSMAFKEAMRRANPVVLEPMMAVEVETPEDYMGNVMGDLSGRRGIVQGMEDMVGGGKIVRAEVPLSEMFGYSTSLRSLTQGRATYTMEFKHYAEAPKNVADAIISAKSK</sequence>
<evidence type="ECO:0000255" key="1">
    <source>
        <dbReference type="HAMAP-Rule" id="MF_00054"/>
    </source>
</evidence>
<feature type="chain" id="PRO_1000008808" description="Elongation factor G">
    <location>
        <begin position="1"/>
        <end position="700"/>
    </location>
</feature>
<feature type="domain" description="tr-type G">
    <location>
        <begin position="8"/>
        <end position="290"/>
    </location>
</feature>
<feature type="binding site" evidence="1">
    <location>
        <begin position="17"/>
        <end position="24"/>
    </location>
    <ligand>
        <name>GTP</name>
        <dbReference type="ChEBI" id="CHEBI:37565"/>
    </ligand>
</feature>
<feature type="binding site" evidence="1">
    <location>
        <begin position="88"/>
        <end position="92"/>
    </location>
    <ligand>
        <name>GTP</name>
        <dbReference type="ChEBI" id="CHEBI:37565"/>
    </ligand>
</feature>
<feature type="binding site" evidence="1">
    <location>
        <begin position="142"/>
        <end position="145"/>
    </location>
    <ligand>
        <name>GTP</name>
        <dbReference type="ChEBI" id="CHEBI:37565"/>
    </ligand>
</feature>
<gene>
    <name evidence="1" type="primary">fusA</name>
    <name type="ordered locus">BMA10229_A1921</name>
</gene>
<name>EFG_BURM9</name>
<proteinExistence type="inferred from homology"/>
<keyword id="KW-0963">Cytoplasm</keyword>
<keyword id="KW-0251">Elongation factor</keyword>
<keyword id="KW-0342">GTP-binding</keyword>
<keyword id="KW-0547">Nucleotide-binding</keyword>
<keyword id="KW-0648">Protein biosynthesis</keyword>
<comment type="function">
    <text evidence="1">Catalyzes the GTP-dependent ribosomal translocation step during translation elongation. During this step, the ribosome changes from the pre-translocational (PRE) to the post-translocational (POST) state as the newly formed A-site-bound peptidyl-tRNA and P-site-bound deacylated tRNA move to the P and E sites, respectively. Catalyzes the coordinated movement of the two tRNA molecules, the mRNA and conformational changes in the ribosome.</text>
</comment>
<comment type="subcellular location">
    <subcellularLocation>
        <location evidence="1">Cytoplasm</location>
    </subcellularLocation>
</comment>
<comment type="similarity">
    <text evidence="1">Belongs to the TRAFAC class translation factor GTPase superfamily. Classic translation factor GTPase family. EF-G/EF-2 subfamily.</text>
</comment>
<dbReference type="EMBL" id="CP000546">
    <property type="protein sequence ID" value="ABN02931.1"/>
    <property type="molecule type" value="Genomic_DNA"/>
</dbReference>
<dbReference type="RefSeq" id="WP_004198357.1">
    <property type="nucleotide sequence ID" value="NC_008836.1"/>
</dbReference>
<dbReference type="SMR" id="A2S7H3"/>
<dbReference type="GeneID" id="93061835"/>
<dbReference type="KEGG" id="bml:BMA10229_A1921"/>
<dbReference type="HOGENOM" id="CLU_002794_4_1_4"/>
<dbReference type="Proteomes" id="UP000002283">
    <property type="component" value="Chromosome I"/>
</dbReference>
<dbReference type="GO" id="GO:0005737">
    <property type="term" value="C:cytoplasm"/>
    <property type="evidence" value="ECO:0007669"/>
    <property type="project" value="UniProtKB-SubCell"/>
</dbReference>
<dbReference type="GO" id="GO:0005525">
    <property type="term" value="F:GTP binding"/>
    <property type="evidence" value="ECO:0007669"/>
    <property type="project" value="UniProtKB-UniRule"/>
</dbReference>
<dbReference type="GO" id="GO:0003924">
    <property type="term" value="F:GTPase activity"/>
    <property type="evidence" value="ECO:0007669"/>
    <property type="project" value="InterPro"/>
</dbReference>
<dbReference type="GO" id="GO:0097216">
    <property type="term" value="F:guanosine tetraphosphate binding"/>
    <property type="evidence" value="ECO:0007669"/>
    <property type="project" value="UniProtKB-ARBA"/>
</dbReference>
<dbReference type="GO" id="GO:0003746">
    <property type="term" value="F:translation elongation factor activity"/>
    <property type="evidence" value="ECO:0007669"/>
    <property type="project" value="UniProtKB-UniRule"/>
</dbReference>
<dbReference type="GO" id="GO:0032790">
    <property type="term" value="P:ribosome disassembly"/>
    <property type="evidence" value="ECO:0007669"/>
    <property type="project" value="TreeGrafter"/>
</dbReference>
<dbReference type="CDD" id="cd01886">
    <property type="entry name" value="EF-G"/>
    <property type="match status" value="1"/>
</dbReference>
<dbReference type="CDD" id="cd16262">
    <property type="entry name" value="EFG_III"/>
    <property type="match status" value="1"/>
</dbReference>
<dbReference type="CDD" id="cd01434">
    <property type="entry name" value="EFG_mtEFG1_IV"/>
    <property type="match status" value="1"/>
</dbReference>
<dbReference type="CDD" id="cd03713">
    <property type="entry name" value="EFG_mtEFG_C"/>
    <property type="match status" value="1"/>
</dbReference>
<dbReference type="CDD" id="cd04088">
    <property type="entry name" value="EFG_mtEFG_II"/>
    <property type="match status" value="1"/>
</dbReference>
<dbReference type="FunFam" id="2.40.30.10:FF:000006">
    <property type="entry name" value="Elongation factor G"/>
    <property type="match status" value="1"/>
</dbReference>
<dbReference type="FunFam" id="3.30.230.10:FF:000003">
    <property type="entry name" value="Elongation factor G"/>
    <property type="match status" value="1"/>
</dbReference>
<dbReference type="FunFam" id="3.30.70.240:FF:000001">
    <property type="entry name" value="Elongation factor G"/>
    <property type="match status" value="1"/>
</dbReference>
<dbReference type="FunFam" id="3.30.70.870:FF:000001">
    <property type="entry name" value="Elongation factor G"/>
    <property type="match status" value="1"/>
</dbReference>
<dbReference type="FunFam" id="3.40.50.300:FF:000029">
    <property type="entry name" value="Elongation factor G"/>
    <property type="match status" value="1"/>
</dbReference>
<dbReference type="Gene3D" id="3.30.230.10">
    <property type="match status" value="1"/>
</dbReference>
<dbReference type="Gene3D" id="3.30.70.240">
    <property type="match status" value="1"/>
</dbReference>
<dbReference type="Gene3D" id="3.30.70.870">
    <property type="entry name" value="Elongation Factor G (Translational Gtpase), domain 3"/>
    <property type="match status" value="1"/>
</dbReference>
<dbReference type="Gene3D" id="3.40.50.300">
    <property type="entry name" value="P-loop containing nucleotide triphosphate hydrolases"/>
    <property type="match status" value="1"/>
</dbReference>
<dbReference type="Gene3D" id="2.40.30.10">
    <property type="entry name" value="Translation factors"/>
    <property type="match status" value="1"/>
</dbReference>
<dbReference type="HAMAP" id="MF_00054_B">
    <property type="entry name" value="EF_G_EF_2_B"/>
    <property type="match status" value="1"/>
</dbReference>
<dbReference type="InterPro" id="IPR041095">
    <property type="entry name" value="EFG_II"/>
</dbReference>
<dbReference type="InterPro" id="IPR009022">
    <property type="entry name" value="EFG_III"/>
</dbReference>
<dbReference type="InterPro" id="IPR035647">
    <property type="entry name" value="EFG_III/V"/>
</dbReference>
<dbReference type="InterPro" id="IPR047872">
    <property type="entry name" value="EFG_IV"/>
</dbReference>
<dbReference type="InterPro" id="IPR035649">
    <property type="entry name" value="EFG_V"/>
</dbReference>
<dbReference type="InterPro" id="IPR000640">
    <property type="entry name" value="EFG_V-like"/>
</dbReference>
<dbReference type="InterPro" id="IPR004161">
    <property type="entry name" value="EFTu-like_2"/>
</dbReference>
<dbReference type="InterPro" id="IPR031157">
    <property type="entry name" value="G_TR_CS"/>
</dbReference>
<dbReference type="InterPro" id="IPR027417">
    <property type="entry name" value="P-loop_NTPase"/>
</dbReference>
<dbReference type="InterPro" id="IPR020568">
    <property type="entry name" value="Ribosomal_Su5_D2-typ_SF"/>
</dbReference>
<dbReference type="InterPro" id="IPR014721">
    <property type="entry name" value="Ribsml_uS5_D2-typ_fold_subgr"/>
</dbReference>
<dbReference type="InterPro" id="IPR005225">
    <property type="entry name" value="Small_GTP-bd"/>
</dbReference>
<dbReference type="InterPro" id="IPR000795">
    <property type="entry name" value="T_Tr_GTP-bd_dom"/>
</dbReference>
<dbReference type="InterPro" id="IPR009000">
    <property type="entry name" value="Transl_B-barrel_sf"/>
</dbReference>
<dbReference type="InterPro" id="IPR004540">
    <property type="entry name" value="Transl_elong_EFG/EF2"/>
</dbReference>
<dbReference type="InterPro" id="IPR005517">
    <property type="entry name" value="Transl_elong_EFG/EF2_IV"/>
</dbReference>
<dbReference type="NCBIfam" id="TIGR00484">
    <property type="entry name" value="EF-G"/>
    <property type="match status" value="1"/>
</dbReference>
<dbReference type="NCBIfam" id="NF009381">
    <property type="entry name" value="PRK12740.1-5"/>
    <property type="match status" value="1"/>
</dbReference>
<dbReference type="NCBIfam" id="TIGR00231">
    <property type="entry name" value="small_GTP"/>
    <property type="match status" value="1"/>
</dbReference>
<dbReference type="PANTHER" id="PTHR43261:SF1">
    <property type="entry name" value="RIBOSOME-RELEASING FACTOR 2, MITOCHONDRIAL"/>
    <property type="match status" value="1"/>
</dbReference>
<dbReference type="PANTHER" id="PTHR43261">
    <property type="entry name" value="TRANSLATION ELONGATION FACTOR G-RELATED"/>
    <property type="match status" value="1"/>
</dbReference>
<dbReference type="Pfam" id="PF00679">
    <property type="entry name" value="EFG_C"/>
    <property type="match status" value="1"/>
</dbReference>
<dbReference type="Pfam" id="PF14492">
    <property type="entry name" value="EFG_III"/>
    <property type="match status" value="1"/>
</dbReference>
<dbReference type="Pfam" id="PF03764">
    <property type="entry name" value="EFG_IV"/>
    <property type="match status" value="1"/>
</dbReference>
<dbReference type="Pfam" id="PF00009">
    <property type="entry name" value="GTP_EFTU"/>
    <property type="match status" value="1"/>
</dbReference>
<dbReference type="Pfam" id="PF03144">
    <property type="entry name" value="GTP_EFTU_D2"/>
    <property type="match status" value="1"/>
</dbReference>
<dbReference type="PRINTS" id="PR00315">
    <property type="entry name" value="ELONGATNFCT"/>
</dbReference>
<dbReference type="SMART" id="SM00838">
    <property type="entry name" value="EFG_C"/>
    <property type="match status" value="1"/>
</dbReference>
<dbReference type="SMART" id="SM00889">
    <property type="entry name" value="EFG_IV"/>
    <property type="match status" value="1"/>
</dbReference>
<dbReference type="SUPFAM" id="SSF54980">
    <property type="entry name" value="EF-G C-terminal domain-like"/>
    <property type="match status" value="2"/>
</dbReference>
<dbReference type="SUPFAM" id="SSF52540">
    <property type="entry name" value="P-loop containing nucleoside triphosphate hydrolases"/>
    <property type="match status" value="1"/>
</dbReference>
<dbReference type="SUPFAM" id="SSF54211">
    <property type="entry name" value="Ribosomal protein S5 domain 2-like"/>
    <property type="match status" value="1"/>
</dbReference>
<dbReference type="SUPFAM" id="SSF50447">
    <property type="entry name" value="Translation proteins"/>
    <property type="match status" value="1"/>
</dbReference>
<dbReference type="PROSITE" id="PS00301">
    <property type="entry name" value="G_TR_1"/>
    <property type="match status" value="1"/>
</dbReference>
<dbReference type="PROSITE" id="PS51722">
    <property type="entry name" value="G_TR_2"/>
    <property type="match status" value="1"/>
</dbReference>
<organism>
    <name type="scientific">Burkholderia mallei (strain NCTC 10229)</name>
    <dbReference type="NCBI Taxonomy" id="412022"/>
    <lineage>
        <taxon>Bacteria</taxon>
        <taxon>Pseudomonadati</taxon>
        <taxon>Pseudomonadota</taxon>
        <taxon>Betaproteobacteria</taxon>
        <taxon>Burkholderiales</taxon>
        <taxon>Burkholderiaceae</taxon>
        <taxon>Burkholderia</taxon>
        <taxon>pseudomallei group</taxon>
    </lineage>
</organism>
<protein>
    <recommendedName>
        <fullName evidence="1">Elongation factor G</fullName>
        <shortName evidence="1">EF-G</shortName>
    </recommendedName>
</protein>
<accession>A2S7H3</accession>
<reference key="1">
    <citation type="journal article" date="2010" name="Genome Biol. Evol.">
        <title>Continuing evolution of Burkholderia mallei through genome reduction and large-scale rearrangements.</title>
        <authorList>
            <person name="Losada L."/>
            <person name="Ronning C.M."/>
            <person name="DeShazer D."/>
            <person name="Woods D."/>
            <person name="Fedorova N."/>
            <person name="Kim H.S."/>
            <person name="Shabalina S.A."/>
            <person name="Pearson T.R."/>
            <person name="Brinkac L."/>
            <person name="Tan P."/>
            <person name="Nandi T."/>
            <person name="Crabtree J."/>
            <person name="Badger J."/>
            <person name="Beckstrom-Sternberg S."/>
            <person name="Saqib M."/>
            <person name="Schutzer S.E."/>
            <person name="Keim P."/>
            <person name="Nierman W.C."/>
        </authorList>
    </citation>
    <scope>NUCLEOTIDE SEQUENCE [LARGE SCALE GENOMIC DNA]</scope>
    <source>
        <strain>NCTC 10229</strain>
    </source>
</reference>